<evidence type="ECO:0000250" key="1"/>
<evidence type="ECO:0000255" key="2"/>
<evidence type="ECO:0000256" key="3">
    <source>
        <dbReference type="SAM" id="MobiDB-lite"/>
    </source>
</evidence>
<evidence type="ECO:0000305" key="4"/>
<protein>
    <recommendedName>
        <fullName>Probable polyribonucleotide nucleotidyltransferase 1, chloroplastic</fullName>
        <ecNumber>2.7.7.8</ecNumber>
    </recommendedName>
    <alternativeName>
        <fullName>Polynucleotide phosphorylase 1</fullName>
        <shortName>PNPase 1</shortName>
    </alternativeName>
</protein>
<keyword id="KW-0150">Chloroplast</keyword>
<keyword id="KW-0269">Exonuclease</keyword>
<keyword id="KW-0378">Hydrolase</keyword>
<keyword id="KW-0507">mRNA processing</keyword>
<keyword id="KW-0540">Nuclease</keyword>
<keyword id="KW-0548">Nucleotidyltransferase</keyword>
<keyword id="KW-0934">Plastid</keyword>
<keyword id="KW-1185">Reference proteome</keyword>
<keyword id="KW-0694">RNA-binding</keyword>
<keyword id="KW-0698">rRNA processing</keyword>
<keyword id="KW-0808">Transferase</keyword>
<keyword id="KW-0809">Transit peptide</keyword>
<keyword id="KW-0819">tRNA processing</keyword>
<accession>Q69LE7</accession>
<accession>A0A0P0X2J5</accession>
<sequence>MLATPGALHHLLLLPPPPHTQLAFHHAVGGVPAALLPLPRPRRVAASASTSRRGGARRRAAGARVRASVGEEAPPVVTEEASTSGGPTKFSTKIPVGDRHILVETGHIGRQASASVMVTDGETIVYSSVCLADTPNDPSDFFPMSVHYQERLSAAGRTSGGFFKREGRAKDHEVLVCRLIDRPLRPTMPKGFYYETQILSWVFSYDGIHSPDSLAITAAGVAMALSEVPNKQTIAGVRVGMINDQFVVNPTTEQMDDSELDLVMAGTDSAILMIEGYCDFLTEEKLLQAVETGQGAIREICKAIDGLVQKCGKKKMFDAIDLPPPELYRHVEDISGDELVKALQIKEKILRRKALSALEEKVITILSEQGYVAKDESSGVSENLADVIEEEDEDEVIVDGEVDEGEVHIKPVSRKPPRQLFSEVDVKLVFKEVSSKFLRRRIVEGGKRSDGRSPCELRPINSQCGLLPRAHGSALFTRGETQALAVVTLGDYQMAQRIDNLVDTEESKSFYLQYTFPPSSVGEVGRIGAPNRREIGHGMLAERALEPILPPEEDFPYTIRVESTITESNGSSSMASVCGGCLALQDAGVPIKFPVAGIAMGLVLDTLEFGGDGKPLILSDITGAEDASGDMDFKVAGNENGISAFQMDIKVVGITLPIMEHALLQARDGRKHILNEMSKCSPPPAKVLSPYAPLIHVMKVKPNKVNLIIGSGGKTIKSIIEETGVDAIDTGDDGTVKITARDLSSLEKSKAIIANLTMVPKVGEIYRNCEIKTIAPYGAFVEIAPGREGLCHISELSSSWLAKAEDAFKVGDRIDVKLIEINDKGQLRLSSRALLPDANQESSSKQQAGGSTREKAPQKDNLVKMTTRRPRRKKQAEASTAENNATASPKDLASQGSEMGTE</sequence>
<comment type="function">
    <text evidence="1">Involved in the metabolism of all major classes of plastid RNAs. Required for efficient 3'-end processing of mRNAs and 3'-end maturation of rRNA transcripts, but is not sufficient to mediate their degradation. Mediates tRNA degradation. May function as a poly(A) mRNA 3'-5' degrading phosphorylase (By similarity).</text>
</comment>
<comment type="catalytic activity">
    <reaction>
        <text>RNA(n+1) + phosphate = RNA(n) + a ribonucleoside 5'-diphosphate</text>
        <dbReference type="Rhea" id="RHEA:22096"/>
        <dbReference type="Rhea" id="RHEA-COMP:14527"/>
        <dbReference type="Rhea" id="RHEA-COMP:17342"/>
        <dbReference type="ChEBI" id="CHEBI:43474"/>
        <dbReference type="ChEBI" id="CHEBI:57930"/>
        <dbReference type="ChEBI" id="CHEBI:140395"/>
        <dbReference type="EC" id="2.7.7.8"/>
    </reaction>
</comment>
<comment type="subcellular location">
    <subcellularLocation>
        <location evidence="1">Plastid</location>
        <location evidence="1">Chloroplast</location>
    </subcellularLocation>
</comment>
<comment type="similarity">
    <text evidence="4">Belongs to the polyribonucleotide nucleotidyltransferase family.</text>
</comment>
<comment type="sequence caution" evidence="4">
    <conflict type="miscellaneous discrepancy">
        <sequence resource="EMBL" id="AK065622"/>
    </conflict>
    <text>Sequencing errors.</text>
</comment>
<organism>
    <name type="scientific">Oryza sativa subsp. japonica</name>
    <name type="common">Rice</name>
    <dbReference type="NCBI Taxonomy" id="39947"/>
    <lineage>
        <taxon>Eukaryota</taxon>
        <taxon>Viridiplantae</taxon>
        <taxon>Streptophyta</taxon>
        <taxon>Embryophyta</taxon>
        <taxon>Tracheophyta</taxon>
        <taxon>Spermatophyta</taxon>
        <taxon>Magnoliopsida</taxon>
        <taxon>Liliopsida</taxon>
        <taxon>Poales</taxon>
        <taxon>Poaceae</taxon>
        <taxon>BOP clade</taxon>
        <taxon>Oryzoideae</taxon>
        <taxon>Oryzeae</taxon>
        <taxon>Oryzinae</taxon>
        <taxon>Oryza</taxon>
        <taxon>Oryza sativa</taxon>
    </lineage>
</organism>
<proteinExistence type="evidence at transcript level"/>
<feature type="transit peptide" description="Chloroplast" evidence="2">
    <location>
        <begin position="1"/>
        <end position="66"/>
    </location>
</feature>
<feature type="chain" id="PRO_0000420276" description="Probable polyribonucleotide nucleotidyltransferase 1, chloroplastic">
    <location>
        <begin position="67"/>
        <end position="902"/>
    </location>
</feature>
<feature type="domain" description="KH">
    <location>
        <begin position="693"/>
        <end position="753"/>
    </location>
</feature>
<feature type="domain" description="S1 motif">
    <location>
        <begin position="763"/>
        <end position="832"/>
    </location>
</feature>
<feature type="region of interest" description="Disordered" evidence="3">
    <location>
        <begin position="44"/>
        <end position="93"/>
    </location>
</feature>
<feature type="region of interest" description="Disordered" evidence="3">
    <location>
        <begin position="833"/>
        <end position="902"/>
    </location>
</feature>
<feature type="compositionally biased region" description="Low complexity" evidence="3">
    <location>
        <begin position="44"/>
        <end position="53"/>
    </location>
</feature>
<feature type="compositionally biased region" description="Polar residues" evidence="3">
    <location>
        <begin position="80"/>
        <end position="91"/>
    </location>
</feature>
<feature type="compositionally biased region" description="Polar residues" evidence="3">
    <location>
        <begin position="839"/>
        <end position="850"/>
    </location>
</feature>
<feature type="compositionally biased region" description="Basic and acidic residues" evidence="3">
    <location>
        <begin position="852"/>
        <end position="862"/>
    </location>
</feature>
<feature type="compositionally biased region" description="Low complexity" evidence="3">
    <location>
        <begin position="877"/>
        <end position="888"/>
    </location>
</feature>
<gene>
    <name type="primary">PNP1</name>
    <name type="ordered locus">Os07g0168000</name>
    <name type="ordered locus">LOC_Os07g07310</name>
    <name type="ORF">OSJNBa0050F10.4</name>
</gene>
<name>PNP1_ORYSJ</name>
<reference key="1">
    <citation type="journal article" date="2005" name="Nature">
        <title>The map-based sequence of the rice genome.</title>
        <authorList>
            <consortium name="International rice genome sequencing project (IRGSP)"/>
        </authorList>
    </citation>
    <scope>NUCLEOTIDE SEQUENCE [LARGE SCALE GENOMIC DNA]</scope>
    <source>
        <strain>cv. Nipponbare</strain>
    </source>
</reference>
<reference key="2">
    <citation type="journal article" date="2008" name="Nucleic Acids Res.">
        <title>The rice annotation project database (RAP-DB): 2008 update.</title>
        <authorList>
            <consortium name="The rice annotation project (RAP)"/>
        </authorList>
    </citation>
    <scope>GENOME REANNOTATION</scope>
    <source>
        <strain>cv. Nipponbare</strain>
    </source>
</reference>
<reference key="3">
    <citation type="journal article" date="2013" name="Rice">
        <title>Improvement of the Oryza sativa Nipponbare reference genome using next generation sequence and optical map data.</title>
        <authorList>
            <person name="Kawahara Y."/>
            <person name="de la Bastide M."/>
            <person name="Hamilton J.P."/>
            <person name="Kanamori H."/>
            <person name="McCombie W.R."/>
            <person name="Ouyang S."/>
            <person name="Schwartz D.C."/>
            <person name="Tanaka T."/>
            <person name="Wu J."/>
            <person name="Zhou S."/>
            <person name="Childs K.L."/>
            <person name="Davidson R.M."/>
            <person name="Lin H."/>
            <person name="Quesada-Ocampo L."/>
            <person name="Vaillancourt B."/>
            <person name="Sakai H."/>
            <person name="Lee S.S."/>
            <person name="Kim J."/>
            <person name="Numa H."/>
            <person name="Itoh T."/>
            <person name="Buell C.R."/>
            <person name="Matsumoto T."/>
        </authorList>
    </citation>
    <scope>GENOME REANNOTATION</scope>
    <source>
        <strain>cv. Nipponbare</strain>
    </source>
</reference>
<reference key="4">
    <citation type="journal article" date="2003" name="Science">
        <title>Collection, mapping, and annotation of over 28,000 cDNA clones from japonica rice.</title>
        <authorList>
            <consortium name="The rice full-length cDNA consortium"/>
        </authorList>
    </citation>
    <scope>NUCLEOTIDE SEQUENCE [LARGE SCALE MRNA]</scope>
    <source>
        <strain>cv. Nipponbare</strain>
    </source>
</reference>
<dbReference type="EC" id="2.7.7.8"/>
<dbReference type="EMBL" id="AP005840">
    <property type="protein sequence ID" value="BAD31776.1"/>
    <property type="molecule type" value="Genomic_DNA"/>
</dbReference>
<dbReference type="EMBL" id="AP008213">
    <property type="protein sequence ID" value="BAF20896.1"/>
    <property type="molecule type" value="Genomic_DNA"/>
</dbReference>
<dbReference type="EMBL" id="AP014963">
    <property type="protein sequence ID" value="BAT00221.1"/>
    <property type="molecule type" value="Genomic_DNA"/>
</dbReference>
<dbReference type="EMBL" id="AK065622">
    <property type="status" value="NOT_ANNOTATED_CDS"/>
    <property type="molecule type" value="mRNA"/>
</dbReference>
<dbReference type="RefSeq" id="XP_015647677.1">
    <property type="nucleotide sequence ID" value="XM_015792191.1"/>
</dbReference>
<dbReference type="SMR" id="Q69LE7"/>
<dbReference type="FunCoup" id="Q69LE7">
    <property type="interactions" value="690"/>
</dbReference>
<dbReference type="STRING" id="39947.Q69LE7"/>
<dbReference type="PaxDb" id="39947-Q69LE7"/>
<dbReference type="EnsemblPlants" id="Os07t0168000-01">
    <property type="protein sequence ID" value="Os07t0168000-01"/>
    <property type="gene ID" value="Os07g0168000"/>
</dbReference>
<dbReference type="Gramene" id="Os07t0168000-01">
    <property type="protein sequence ID" value="Os07t0168000-01"/>
    <property type="gene ID" value="Os07g0168000"/>
</dbReference>
<dbReference type="KEGG" id="dosa:Os07g0168000"/>
<dbReference type="eggNOG" id="KOG1067">
    <property type="taxonomic scope" value="Eukaryota"/>
</dbReference>
<dbReference type="HOGENOM" id="CLU_004217_2_2_1"/>
<dbReference type="InParanoid" id="Q69LE7"/>
<dbReference type="OMA" id="RFMFHYN"/>
<dbReference type="OrthoDB" id="437922at2759"/>
<dbReference type="Proteomes" id="UP000000763">
    <property type="component" value="Chromosome 7"/>
</dbReference>
<dbReference type="Proteomes" id="UP000059680">
    <property type="component" value="Chromosome 7"/>
</dbReference>
<dbReference type="GO" id="GO:0009507">
    <property type="term" value="C:chloroplast"/>
    <property type="evidence" value="ECO:0007669"/>
    <property type="project" value="UniProtKB-SubCell"/>
</dbReference>
<dbReference type="GO" id="GO:0005829">
    <property type="term" value="C:cytosol"/>
    <property type="evidence" value="ECO:0000318"/>
    <property type="project" value="GO_Central"/>
</dbReference>
<dbReference type="GO" id="GO:0005739">
    <property type="term" value="C:mitochondrion"/>
    <property type="evidence" value="ECO:0000318"/>
    <property type="project" value="GO_Central"/>
</dbReference>
<dbReference type="GO" id="GO:0000175">
    <property type="term" value="F:3'-5'-RNA exonuclease activity"/>
    <property type="evidence" value="ECO:0000318"/>
    <property type="project" value="GO_Central"/>
</dbReference>
<dbReference type="GO" id="GO:0004654">
    <property type="term" value="F:polyribonucleotide nucleotidyltransferase activity"/>
    <property type="evidence" value="ECO:0000318"/>
    <property type="project" value="GO_Central"/>
</dbReference>
<dbReference type="GO" id="GO:0003723">
    <property type="term" value="F:RNA binding"/>
    <property type="evidence" value="ECO:0007669"/>
    <property type="project" value="UniProtKB-KW"/>
</dbReference>
<dbReference type="GO" id="GO:0000958">
    <property type="term" value="P:mitochondrial mRNA catabolic process"/>
    <property type="evidence" value="ECO:0000318"/>
    <property type="project" value="GO_Central"/>
</dbReference>
<dbReference type="GO" id="GO:0000965">
    <property type="term" value="P:mitochondrial RNA 3'-end processing"/>
    <property type="evidence" value="ECO:0000318"/>
    <property type="project" value="GO_Central"/>
</dbReference>
<dbReference type="GO" id="GO:0006397">
    <property type="term" value="P:mRNA processing"/>
    <property type="evidence" value="ECO:0007669"/>
    <property type="project" value="UniProtKB-KW"/>
</dbReference>
<dbReference type="GO" id="GO:0006364">
    <property type="term" value="P:rRNA processing"/>
    <property type="evidence" value="ECO:0007669"/>
    <property type="project" value="UniProtKB-KW"/>
</dbReference>
<dbReference type="GO" id="GO:0008033">
    <property type="term" value="P:tRNA processing"/>
    <property type="evidence" value="ECO:0007669"/>
    <property type="project" value="UniProtKB-KW"/>
</dbReference>
<dbReference type="CDD" id="cd02393">
    <property type="entry name" value="KH-I_PNPase"/>
    <property type="match status" value="1"/>
</dbReference>
<dbReference type="CDD" id="cd11364">
    <property type="entry name" value="RNase_PH_PNPase_2"/>
    <property type="match status" value="1"/>
</dbReference>
<dbReference type="CDD" id="cd04472">
    <property type="entry name" value="S1_PNPase"/>
    <property type="match status" value="1"/>
</dbReference>
<dbReference type="FunFam" id="3.30.1370.10:FF:000001">
    <property type="entry name" value="Polyribonucleotide nucleotidyltransferase"/>
    <property type="match status" value="1"/>
</dbReference>
<dbReference type="FunFam" id="3.30.230.70:FF:000001">
    <property type="entry name" value="Polyribonucleotide nucleotidyltransferase"/>
    <property type="match status" value="1"/>
</dbReference>
<dbReference type="FunFam" id="3.30.230.70:FF:000013">
    <property type="entry name" value="Polyribonucleotide nucleotidyltransferase"/>
    <property type="match status" value="1"/>
</dbReference>
<dbReference type="FunFam" id="2.40.50.140:FF:000158">
    <property type="entry name" value="Polyribonucleotide nucleotidyltransferase 1, chloroplastic"/>
    <property type="match status" value="1"/>
</dbReference>
<dbReference type="Gene3D" id="3.30.230.70">
    <property type="entry name" value="GHMP Kinase, N-terminal domain"/>
    <property type="match status" value="2"/>
</dbReference>
<dbReference type="Gene3D" id="3.30.1370.10">
    <property type="entry name" value="K Homology domain, type 1"/>
    <property type="match status" value="1"/>
</dbReference>
<dbReference type="Gene3D" id="2.40.50.140">
    <property type="entry name" value="Nucleic acid-binding proteins"/>
    <property type="match status" value="1"/>
</dbReference>
<dbReference type="HAMAP" id="MF_01595">
    <property type="entry name" value="PNPase"/>
    <property type="match status" value="1"/>
</dbReference>
<dbReference type="InterPro" id="IPR001247">
    <property type="entry name" value="ExoRNase_PH_dom1"/>
</dbReference>
<dbReference type="InterPro" id="IPR015847">
    <property type="entry name" value="ExoRNase_PH_dom2"/>
</dbReference>
<dbReference type="InterPro" id="IPR036345">
    <property type="entry name" value="ExoRNase_PH_dom2_sf"/>
</dbReference>
<dbReference type="InterPro" id="IPR004087">
    <property type="entry name" value="KH_dom"/>
</dbReference>
<dbReference type="InterPro" id="IPR004088">
    <property type="entry name" value="KH_dom_type_1"/>
</dbReference>
<dbReference type="InterPro" id="IPR036612">
    <property type="entry name" value="KH_dom_type_1_sf"/>
</dbReference>
<dbReference type="InterPro" id="IPR012340">
    <property type="entry name" value="NA-bd_OB-fold"/>
</dbReference>
<dbReference type="InterPro" id="IPR012162">
    <property type="entry name" value="PNPase"/>
</dbReference>
<dbReference type="InterPro" id="IPR027408">
    <property type="entry name" value="PNPase/RNase_PH_dom_sf"/>
</dbReference>
<dbReference type="InterPro" id="IPR020568">
    <property type="entry name" value="Ribosomal_Su5_D2-typ_SF"/>
</dbReference>
<dbReference type="InterPro" id="IPR003029">
    <property type="entry name" value="S1_domain"/>
</dbReference>
<dbReference type="NCBIfam" id="TIGR03591">
    <property type="entry name" value="polynuc_phos"/>
    <property type="match status" value="1"/>
</dbReference>
<dbReference type="NCBIfam" id="NF008805">
    <property type="entry name" value="PRK11824.1"/>
    <property type="match status" value="1"/>
</dbReference>
<dbReference type="PANTHER" id="PTHR11252">
    <property type="entry name" value="POLYRIBONUCLEOTIDE NUCLEOTIDYLTRANSFERASE"/>
    <property type="match status" value="1"/>
</dbReference>
<dbReference type="PANTHER" id="PTHR11252:SF0">
    <property type="entry name" value="POLYRIBONUCLEOTIDE NUCLEOTIDYLTRANSFERASE 1, MITOCHONDRIAL"/>
    <property type="match status" value="1"/>
</dbReference>
<dbReference type="Pfam" id="PF00013">
    <property type="entry name" value="KH_1"/>
    <property type="match status" value="1"/>
</dbReference>
<dbReference type="Pfam" id="PF01138">
    <property type="entry name" value="RNase_PH"/>
    <property type="match status" value="2"/>
</dbReference>
<dbReference type="Pfam" id="PF03725">
    <property type="entry name" value="RNase_PH_C"/>
    <property type="match status" value="1"/>
</dbReference>
<dbReference type="Pfam" id="PF00575">
    <property type="entry name" value="S1"/>
    <property type="match status" value="1"/>
</dbReference>
<dbReference type="SMART" id="SM00322">
    <property type="entry name" value="KH"/>
    <property type="match status" value="1"/>
</dbReference>
<dbReference type="SMART" id="SM00316">
    <property type="entry name" value="S1"/>
    <property type="match status" value="1"/>
</dbReference>
<dbReference type="SUPFAM" id="SSF54791">
    <property type="entry name" value="Eukaryotic type KH-domain (KH-domain type I)"/>
    <property type="match status" value="1"/>
</dbReference>
<dbReference type="SUPFAM" id="SSF50249">
    <property type="entry name" value="Nucleic acid-binding proteins"/>
    <property type="match status" value="1"/>
</dbReference>
<dbReference type="SUPFAM" id="SSF55666">
    <property type="entry name" value="Ribonuclease PH domain 2-like"/>
    <property type="match status" value="2"/>
</dbReference>
<dbReference type="SUPFAM" id="SSF54211">
    <property type="entry name" value="Ribosomal protein S5 domain 2-like"/>
    <property type="match status" value="2"/>
</dbReference>
<dbReference type="PROSITE" id="PS50084">
    <property type="entry name" value="KH_TYPE_1"/>
    <property type="match status" value="1"/>
</dbReference>
<dbReference type="PROSITE" id="PS50126">
    <property type="entry name" value="S1"/>
    <property type="match status" value="1"/>
</dbReference>